<protein>
    <recommendedName>
        <fullName>Aggrecan core protein</fullName>
    </recommendedName>
    <alternativeName>
        <fullName>Cartilage-specific proteoglycan core protein</fullName>
        <shortName>CSPCP</shortName>
    </alternativeName>
</protein>
<sequence>MTTLLWVFVTLRVITAASSEETSDHDNSLSVSIPEPSPMRVLLGSSLTIPCYFIDPMHPVTTAPSTAPLAPRIKWSRITKEKEVVLLVATEGQVRINSAYQDKVSLPNYPAIPSDATLEIQNLRSNDSGIYRCEVMHGIEDSEATLEVVVKGIVFHYRAISTRYTLDFDRAQRACLQNSAIIATPEQLQAAYEDGFHQCDAGWLADQTVRYPIHTPREGCYGDKDEFPGVRTYGIRDTNETYDVYCFAEEMEGEVLYATSPEKFTFQEAANECRRLGARLATTGQLYLAWQGGMDMCSAGWLADRSVRYPISKARPNCGGNLLGVRTVYLHANQTGYPDPSSRYDAICYTGEDFVDIPENFFGVGGEEDITIQTVTWPDVELPLPRNITEGEARGNVILTVKPIFDLSPTAPEPEEPFTFVPEPEKPFTFATDVGVTAFPEAENRTGEATRPWGVPEESTPGPAFTAFTSEDHVVQVTAVPGAAEVPGQPRLPGGVVFHYRPGSARYSLTFEEAQQACLRTGAVIASPEQLQAAYEAGYEQCDAGWLQDQTVRYPIVSPRTPCVGDKDSSPGVRTYGVRPPSETYDVYCYVDKLEGEVFFITRLEQFTFQEALAFCESHNATLASTGQLYAAWRQGLDKCYAGWLSDGSLRYPIVTPRPSCGGDKPGVRTVYLYPNQTGLPDPLSRHHVFCFRGVSGVPSPGEEEGGTPTPSVVEDWIPTQVGPVVPSVPMGEETTAILDFTIEPENQTEWEPAYSPAGTSPLPGIPPTWPPTSTATEESTEGPSGTEVPSVSEEPSPSEEPFPWEELSTLSPPGPSGTELPGSGEASGVPEVSGDFTGSGEVSGHPDSSGQLSGESASGLPSEDLDSSGLTSAVGSGLASGDEDRITLSSIPKVEGEGLETSASGVEDLSGLPSGREGLETSTSGVGDLSGLPSGEGLEVSASGVEDLSGLPSGEGPETSTSGVGDLSRLPSGEGPEVSASGVGDLSGLPSGREGLETSTSGVEDLSGLPSGEGPEASTSGVGDLSRLPSGEGPEVSASGVEDLSGLPSGEGLEASASGVGDLSGLPSGEGPEASASGVGDLSRLPSGEGPEVSASGVEDLSGLSSGESPEASASGVGDLSGLPSGREGLETSASGVGDLSGLPSGEGQEASASGVEDLSRLPSGEGPEASASGVGELSGLPSGREGLETSASGVGDLSGLPSGEGPEAFASGVEDLSILPSGEGPEASASGVGDLSGLPSGREGLETSTSGVGDLSGLPSGREGLETSTSGVGDLSGLPSGEGPEASASGIGDISGLPSGREGLETSSSGVEDHPETSASGVEDLSGLPSGVEGHPETSASGVEDLSDLSSGGEGLETSASGAEDLSGFPSGKEDLIGSASGALDFGRIPSGTLGSGQAPEASSLPSGFSGEYSGVDFGSGPISGLPDFSGLPSGFPTISLVDTTLVEVITTTSASELEGRGTIGISGAGETSGLPVSELDISGAVSGLPSGAELSGQASGSPDMSGETSGFFGVSGQPSGFPDISGGTSGLFEVSGQPSGFSGETSGVTELSGLYSGQPDVSGEASGVPSGSGQPFGMTDLSGETSGVPDISGQPSGLPEFSGTTSGIPDLVSSTMSGSGESSGITFVDTSLVEVTPTTFKEKKRLGSVELSGLPSGEVDLSGASGTMDISGQSSGATDSSGLTSHLPKFSGLPSGAAEVSGESSGAEVGSSLPSGTYEGSGNFHPAFPTVFLVDRTLVESVTQAPTAQEAGEGPSGILELSGAHSGAPDVSGDHSGSLDLSGMQSGLVEPSGEPSSTPYFSGDFSGTMDVTGEPSTAMSASGEASGLLEVTLITSEFVEGVTEPTVSQELAQRPPVTHTPQLFESSGEASASGEISGATPAFPGSGLEASSVPESSSETSDFPERAVGVSAAPEASGGASGAPDVSEATSTFPEADVEGASGLGVSGGTSAFPEAPREGSATPEVQEEPTTSYDVGREALGWPSATPTASGDRIEVSGDLSGHTSGLDVVISTSVPESEWIQQTQRPAEAHLEIEASSPLHSGEETQTAETATSPTDDASIPTSPSGTDESAPAIPDIDECLSSPCLNGATCVDAIDSFTCLCLPSYRGDLCEIDQELCEEGWTKFQGHCYRYFPDRESWVDAESRCRAQQSHLSSIVTPEEQEFVNNNAQDYQWIGLNDRTIEGDFRWSDGHSLQFENWRPNQPDNFFVSGEDCVVMIWHEKGEWNDVPCNYYLPFTCKKGTVACGDPPVVEHARTFGQKKDRYEINSLVRYQCTEGFVQRHVPTIRCQPSGHWEKPRITCTDPSTYKRRLQKRSSRAPRRSRPSTAH</sequence>
<accession>Q28343</accession>
<accession>Q28310</accession>
<feature type="signal peptide" evidence="7">
    <location>
        <begin position="1"/>
        <end position="19"/>
    </location>
</feature>
<feature type="chain" id="PRO_0000017503" description="Aggrecan core protein">
    <location>
        <begin position="20"/>
        <end position="2333"/>
    </location>
</feature>
<feature type="domain" description="Ig-like V-type" evidence="10">
    <location>
        <begin position="34"/>
        <end position="147"/>
    </location>
</feature>
<feature type="domain" description="Link 1" evidence="12">
    <location>
        <begin position="153"/>
        <end position="248"/>
    </location>
</feature>
<feature type="domain" description="Link 2" evidence="12">
    <location>
        <begin position="253"/>
        <end position="350"/>
    </location>
</feature>
<feature type="domain" description="Link 3" evidence="12">
    <location>
        <begin position="496"/>
        <end position="591"/>
    </location>
</feature>
<feature type="domain" description="Link 4" evidence="12">
    <location>
        <begin position="597"/>
        <end position="693"/>
    </location>
</feature>
<feature type="domain" description="EGF-like; calcium-binding" evidence="9">
    <location>
        <begin position="2081"/>
        <end position="2117"/>
    </location>
</feature>
<feature type="domain" description="C-type lectin" evidence="8">
    <location>
        <begin position="2130"/>
        <end position="2244"/>
    </location>
</feature>
<feature type="domain" description="Sushi" evidence="11">
    <location>
        <begin position="2248"/>
        <end position="2308"/>
    </location>
</feature>
<feature type="region of interest" description="G1-A">
    <location>
        <begin position="48"/>
        <end position="140"/>
    </location>
</feature>
<feature type="region of interest" description="G1-B">
    <location>
        <begin position="152"/>
        <end position="247"/>
    </location>
</feature>
<feature type="region of interest" description="G1-B'">
    <location>
        <begin position="253"/>
        <end position="349"/>
    </location>
</feature>
<feature type="region of interest" description="G2-B">
    <location>
        <begin position="495"/>
        <end position="589"/>
    </location>
</feature>
<feature type="region of interest" description="G2-B'">
    <location>
        <begin position="596"/>
        <end position="691"/>
    </location>
</feature>
<feature type="region of interest" description="KS">
    <location>
        <begin position="694"/>
        <end position="816"/>
    </location>
</feature>
<feature type="region of interest" description="Disordered" evidence="13">
    <location>
        <begin position="751"/>
        <end position="1376"/>
    </location>
</feature>
<feature type="region of interest" description="CS-1">
    <location>
        <begin position="819"/>
        <end position="1394"/>
    </location>
</feature>
<feature type="region of interest" description="CS-2">
    <location>
        <begin position="1395"/>
        <end position="2079"/>
    </location>
</feature>
<feature type="region of interest" description="Disordered" evidence="13">
    <location>
        <begin position="1490"/>
        <end position="1510"/>
    </location>
</feature>
<feature type="region of interest" description="Disordered" evidence="13">
    <location>
        <begin position="1540"/>
        <end position="1627"/>
    </location>
</feature>
<feature type="region of interest" description="Disordered" evidence="13">
    <location>
        <begin position="1655"/>
        <end position="1723"/>
    </location>
</feature>
<feature type="region of interest" description="Disordered" evidence="13">
    <location>
        <begin position="1749"/>
        <end position="1800"/>
    </location>
</feature>
<feature type="region of interest" description="Disordered" evidence="13">
    <location>
        <begin position="1848"/>
        <end position="2006"/>
    </location>
</feature>
<feature type="region of interest" description="Disordered" evidence="13">
    <location>
        <begin position="2042"/>
        <end position="2079"/>
    </location>
</feature>
<feature type="region of interest" description="G3">
    <location>
        <begin position="2080"/>
        <end position="2333"/>
    </location>
</feature>
<feature type="compositionally biased region" description="Low complexity" evidence="13">
    <location>
        <begin position="772"/>
        <end position="809"/>
    </location>
</feature>
<feature type="compositionally biased region" description="Polar residues" evidence="13">
    <location>
        <begin position="847"/>
        <end position="857"/>
    </location>
</feature>
<feature type="compositionally biased region" description="Low complexity" evidence="13">
    <location>
        <begin position="1097"/>
        <end position="1119"/>
    </location>
</feature>
<feature type="compositionally biased region" description="Polar residues" evidence="13">
    <location>
        <begin position="1499"/>
        <end position="1510"/>
    </location>
</feature>
<feature type="compositionally biased region" description="Polar residues" evidence="13">
    <location>
        <begin position="1540"/>
        <end position="1552"/>
    </location>
</feature>
<feature type="compositionally biased region" description="Low complexity" evidence="13">
    <location>
        <begin position="1616"/>
        <end position="1627"/>
    </location>
</feature>
<feature type="compositionally biased region" description="Polar residues" evidence="13">
    <location>
        <begin position="1667"/>
        <end position="1687"/>
    </location>
</feature>
<feature type="compositionally biased region" description="Low complexity" evidence="13">
    <location>
        <begin position="1698"/>
        <end position="1715"/>
    </location>
</feature>
<feature type="compositionally biased region" description="Low complexity" evidence="13">
    <location>
        <begin position="1777"/>
        <end position="1786"/>
    </location>
</feature>
<feature type="compositionally biased region" description="Low complexity" evidence="13">
    <location>
        <begin position="1868"/>
        <end position="1882"/>
    </location>
</feature>
<feature type="compositionally biased region" description="Low complexity" evidence="13">
    <location>
        <begin position="1889"/>
        <end position="1927"/>
    </location>
</feature>
<feature type="compositionally biased region" description="Polar residues" evidence="13">
    <location>
        <begin position="2049"/>
        <end position="2073"/>
    </location>
</feature>
<feature type="binding site" evidence="2">
    <location>
        <position position="2184"/>
    </location>
    <ligand>
        <name>Ca(2+)</name>
        <dbReference type="ChEBI" id="CHEBI:29108"/>
        <label>1</label>
    </ligand>
</feature>
<feature type="binding site" evidence="2">
    <location>
        <position position="2188"/>
    </location>
    <ligand>
        <name>Ca(2+)</name>
        <dbReference type="ChEBI" id="CHEBI:29108"/>
        <label>1</label>
    </ligand>
</feature>
<feature type="binding site" evidence="2">
    <location>
        <position position="2208"/>
    </location>
    <ligand>
        <name>Ca(2+)</name>
        <dbReference type="ChEBI" id="CHEBI:29108"/>
        <label>2</label>
    </ligand>
</feature>
<feature type="binding site" evidence="2">
    <location>
        <position position="2210"/>
    </location>
    <ligand>
        <name>Ca(2+)</name>
        <dbReference type="ChEBI" id="CHEBI:29108"/>
        <label>2</label>
    </ligand>
</feature>
<feature type="binding site" evidence="2">
    <location>
        <position position="2211"/>
    </location>
    <ligand>
        <name>Ca(2+)</name>
        <dbReference type="ChEBI" id="CHEBI:29108"/>
        <label>1</label>
    </ligand>
</feature>
<feature type="binding site" evidence="2">
    <location>
        <position position="2217"/>
    </location>
    <ligand>
        <name>Ca(2+)</name>
        <dbReference type="ChEBI" id="CHEBI:29108"/>
        <label>1</label>
    </ligand>
</feature>
<feature type="binding site" evidence="2">
    <location>
        <position position="2217"/>
    </location>
    <ligand>
        <name>Ca(2+)</name>
        <dbReference type="ChEBI" id="CHEBI:29108"/>
        <label>2</label>
    </ligand>
</feature>
<feature type="binding site" evidence="2">
    <location>
        <position position="2218"/>
    </location>
    <ligand>
        <name>Ca(2+)</name>
        <dbReference type="ChEBI" id="CHEBI:29108"/>
        <label>1</label>
    </ligand>
</feature>
<feature type="binding site" evidence="2">
    <location>
        <position position="2231"/>
    </location>
    <ligand>
        <name>Ca(2+)</name>
        <dbReference type="ChEBI" id="CHEBI:29108"/>
        <label>2</label>
    </ligand>
</feature>
<feature type="binding site" evidence="2">
    <location>
        <position position="2232"/>
    </location>
    <ligand>
        <name>Ca(2+)</name>
        <dbReference type="ChEBI" id="CHEBI:29108"/>
        <label>2</label>
    </ligand>
</feature>
<feature type="glycosylation site" description="N-linked (GlcNAc...) asparagine" evidence="7">
    <location>
        <position position="126"/>
    </location>
</feature>
<feature type="glycosylation site" description="N-linked (GlcNAc...) asparagine" evidence="7">
    <location>
        <position position="239"/>
    </location>
</feature>
<feature type="glycosylation site" description="N-linked (GlcNAc...) asparagine" evidence="7">
    <location>
        <position position="333"/>
    </location>
</feature>
<feature type="glycosylation site" description="O-linked (Xyl...) (keratan sulfate) threonine" evidence="1">
    <location>
        <position position="371"/>
    </location>
</feature>
<feature type="glycosylation site" description="O-linked (Xyl...) (keratan sulfate) threonine" evidence="1">
    <location>
        <position position="376"/>
    </location>
</feature>
<feature type="glycosylation site" description="N-linked (GlcNAc...) asparagine" evidence="7">
    <location>
        <position position="387"/>
    </location>
</feature>
<feature type="glycosylation site" description="N-linked (GlcNAc...) asparagine" evidence="7">
    <location>
        <position position="444"/>
    </location>
</feature>
<feature type="glycosylation site" description="N-linked (GlcNAc...) asparagine" evidence="7">
    <location>
        <position position="620"/>
    </location>
</feature>
<feature type="glycosylation site" description="N-linked (GlcNAc...) asparagine" evidence="7">
    <location>
        <position position="676"/>
    </location>
</feature>
<feature type="glycosylation site" description="N-linked (GlcNAc...) asparagine" evidence="7">
    <location>
        <position position="747"/>
    </location>
</feature>
<feature type="glycosylation site" description="O-linked (Xyl...) (chondroitin sulfate) serine" evidence="5">
    <location>
        <position position="1301"/>
    </location>
</feature>
<feature type="glycosylation site" description="O-linked (Xyl...) (chondroitin sulfate) serine" evidence="5">
    <location>
        <position position="1349"/>
    </location>
</feature>
<feature type="glycosylation site" description="O-linked (Xyl...) (chondroitin sulfate) serine" evidence="7">
    <location>
        <position position="1363"/>
    </location>
</feature>
<feature type="glycosylation site" description="O-linked (Xyl...) (chondroitin sulfate) serine" evidence="7">
    <location>
        <position position="1369"/>
    </location>
</feature>
<feature type="glycosylation site" description="O-linked (Xyl...) (chondroitin sulfate) serine" evidence="7">
    <location>
        <position position="1373"/>
    </location>
</feature>
<feature type="glycosylation site" description="O-linked (Xyl...) (chondroitin sulfate) serine" evidence="5">
    <location>
        <position position="1383"/>
    </location>
</feature>
<feature type="glycosylation site" description="O-linked (Xyl...) (chondroitin sulfate) serine" evidence="5">
    <location>
        <position position="1485"/>
    </location>
</feature>
<feature type="disulfide bond" evidence="10">
    <location>
        <begin position="51"/>
        <end position="133"/>
    </location>
</feature>
<feature type="disulfide bond" evidence="12">
    <location>
        <begin position="175"/>
        <end position="246"/>
    </location>
</feature>
<feature type="disulfide bond" evidence="12">
    <location>
        <begin position="199"/>
        <end position="220"/>
    </location>
</feature>
<feature type="disulfide bond" evidence="12">
    <location>
        <begin position="273"/>
        <end position="348"/>
    </location>
</feature>
<feature type="disulfide bond" evidence="12">
    <location>
        <begin position="297"/>
        <end position="318"/>
    </location>
</feature>
<feature type="disulfide bond" evidence="12">
    <location>
        <begin position="518"/>
        <end position="589"/>
    </location>
</feature>
<feature type="disulfide bond" evidence="12">
    <location>
        <begin position="542"/>
        <end position="563"/>
    </location>
</feature>
<feature type="disulfide bond" evidence="12">
    <location>
        <begin position="616"/>
        <end position="691"/>
    </location>
</feature>
<feature type="disulfide bond" evidence="12">
    <location>
        <begin position="640"/>
        <end position="661"/>
    </location>
</feature>
<feature type="disulfide bond" evidence="9">
    <location>
        <begin position="2085"/>
        <end position="2096"/>
    </location>
</feature>
<feature type="disulfide bond" evidence="9">
    <location>
        <begin position="2090"/>
        <end position="2105"/>
    </location>
</feature>
<feature type="disulfide bond" evidence="9">
    <location>
        <begin position="2107"/>
        <end position="2116"/>
    </location>
</feature>
<feature type="disulfide bond" evidence="8">
    <location>
        <begin position="2151"/>
        <end position="2243"/>
    </location>
</feature>
<feature type="disulfide bond" evidence="8">
    <location>
        <begin position="2219"/>
        <end position="2235"/>
    </location>
</feature>
<feature type="disulfide bond" evidence="11">
    <location>
        <begin position="2250"/>
        <end position="2293"/>
    </location>
</feature>
<feature type="disulfide bond" evidence="11">
    <location>
        <begin position="2279"/>
        <end position="2306"/>
    </location>
</feature>
<name>PGCA_CANLF</name>
<gene>
    <name type="primary">ACAN</name>
    <name type="synonym">AGC1</name>
</gene>
<organism>
    <name type="scientific">Canis lupus familiaris</name>
    <name type="common">Dog</name>
    <name type="synonym">Canis familiaris</name>
    <dbReference type="NCBI Taxonomy" id="9615"/>
    <lineage>
        <taxon>Eukaryota</taxon>
        <taxon>Metazoa</taxon>
        <taxon>Chordata</taxon>
        <taxon>Craniata</taxon>
        <taxon>Vertebrata</taxon>
        <taxon>Euteleostomi</taxon>
        <taxon>Mammalia</taxon>
        <taxon>Eutheria</taxon>
        <taxon>Laurasiatheria</taxon>
        <taxon>Carnivora</taxon>
        <taxon>Caniformia</taxon>
        <taxon>Canidae</taxon>
        <taxon>Canis</taxon>
    </lineage>
</organism>
<keyword id="KW-0106">Calcium</keyword>
<keyword id="KW-1015">Disulfide bond</keyword>
<keyword id="KW-0245">EGF-like domain</keyword>
<keyword id="KW-0272">Extracellular matrix</keyword>
<keyword id="KW-0325">Glycoprotein</keyword>
<keyword id="KW-0393">Immunoglobulin domain</keyword>
<keyword id="KW-0430">Lectin</keyword>
<keyword id="KW-0479">Metal-binding</keyword>
<keyword id="KW-0654">Proteoglycan</keyword>
<keyword id="KW-1185">Reference proteome</keyword>
<keyword id="KW-0677">Repeat</keyword>
<keyword id="KW-0964">Secreted</keyword>
<keyword id="KW-0732">Signal</keyword>
<keyword id="KW-0768">Sushi</keyword>
<proteinExistence type="evidence at transcript level"/>
<dbReference type="EMBL" id="U65989">
    <property type="protein sequence ID" value="AAB06238.2"/>
    <property type="molecule type" value="mRNA"/>
</dbReference>
<dbReference type="EMBL" id="S74662">
    <property type="protein sequence ID" value="AAC60527.1"/>
    <property type="molecule type" value="mRNA"/>
</dbReference>
<dbReference type="EMBL" id="L07054">
    <property type="status" value="NOT_ANNOTATED_CDS"/>
    <property type="molecule type" value="mRNA"/>
</dbReference>
<dbReference type="PIR" id="I46998">
    <property type="entry name" value="I46998"/>
</dbReference>
<dbReference type="SMR" id="Q28343"/>
<dbReference type="FunCoup" id="Q28343">
    <property type="interactions" value="91"/>
</dbReference>
<dbReference type="STRING" id="9615.ENSCAFP00000065577"/>
<dbReference type="GlyCosmos" id="Q28343">
    <property type="glycosylation" value="10 sites, No reported glycans"/>
</dbReference>
<dbReference type="PaxDb" id="9612-ENSCAFP00000016949"/>
<dbReference type="eggNOG" id="ENOG502QUX8">
    <property type="taxonomic scope" value="Eukaryota"/>
</dbReference>
<dbReference type="InParanoid" id="Q28343"/>
<dbReference type="OrthoDB" id="418245at2759"/>
<dbReference type="Proteomes" id="UP000002254">
    <property type="component" value="Unplaced"/>
</dbReference>
<dbReference type="Proteomes" id="UP000694429">
    <property type="component" value="Unplaced"/>
</dbReference>
<dbReference type="Proteomes" id="UP000694542">
    <property type="component" value="Unplaced"/>
</dbReference>
<dbReference type="Proteomes" id="UP000805418">
    <property type="component" value="Unplaced"/>
</dbReference>
<dbReference type="GO" id="GO:0005615">
    <property type="term" value="C:extracellular space"/>
    <property type="evidence" value="ECO:0000318"/>
    <property type="project" value="GO_Central"/>
</dbReference>
<dbReference type="GO" id="GO:0072534">
    <property type="term" value="C:perineuronal net"/>
    <property type="evidence" value="ECO:0000318"/>
    <property type="project" value="GO_Central"/>
</dbReference>
<dbReference type="GO" id="GO:0045202">
    <property type="term" value="C:synapse"/>
    <property type="evidence" value="ECO:0000318"/>
    <property type="project" value="GO_Central"/>
</dbReference>
<dbReference type="GO" id="GO:0005509">
    <property type="term" value="F:calcium ion binding"/>
    <property type="evidence" value="ECO:0007669"/>
    <property type="project" value="InterPro"/>
</dbReference>
<dbReference type="GO" id="GO:0030246">
    <property type="term" value="F:carbohydrate binding"/>
    <property type="evidence" value="ECO:0007669"/>
    <property type="project" value="UniProtKB-KW"/>
</dbReference>
<dbReference type="GO" id="GO:0005540">
    <property type="term" value="F:hyaluronic acid binding"/>
    <property type="evidence" value="ECO:0007669"/>
    <property type="project" value="InterPro"/>
</dbReference>
<dbReference type="GO" id="GO:0007155">
    <property type="term" value="P:cell adhesion"/>
    <property type="evidence" value="ECO:0007669"/>
    <property type="project" value="InterPro"/>
</dbReference>
<dbReference type="GO" id="GO:0007417">
    <property type="term" value="P:central nervous system development"/>
    <property type="evidence" value="ECO:0000318"/>
    <property type="project" value="GO_Central"/>
</dbReference>
<dbReference type="GO" id="GO:0001501">
    <property type="term" value="P:skeletal system development"/>
    <property type="evidence" value="ECO:0000318"/>
    <property type="project" value="GO_Central"/>
</dbReference>
<dbReference type="CDD" id="cd00033">
    <property type="entry name" value="CCP"/>
    <property type="match status" value="1"/>
</dbReference>
<dbReference type="CDD" id="cd03588">
    <property type="entry name" value="CLECT_CSPGs"/>
    <property type="match status" value="1"/>
</dbReference>
<dbReference type="CDD" id="cd00054">
    <property type="entry name" value="EGF_CA"/>
    <property type="match status" value="1"/>
</dbReference>
<dbReference type="CDD" id="cd05900">
    <property type="entry name" value="Ig_Aggrecan"/>
    <property type="match status" value="1"/>
</dbReference>
<dbReference type="CDD" id="cd03517">
    <property type="entry name" value="Link_domain_CSPGs_modules_1_3"/>
    <property type="match status" value="2"/>
</dbReference>
<dbReference type="CDD" id="cd03520">
    <property type="entry name" value="Link_domain_CSPGs_modules_2_4"/>
    <property type="match status" value="2"/>
</dbReference>
<dbReference type="FunFam" id="3.10.100.10:FF:000009">
    <property type="entry name" value="Aggrecan core protein"/>
    <property type="match status" value="1"/>
</dbReference>
<dbReference type="FunFam" id="3.10.100.10:FF:000011">
    <property type="entry name" value="Aggrecan core protein"/>
    <property type="match status" value="1"/>
</dbReference>
<dbReference type="FunFam" id="2.60.40.10:FF:000451">
    <property type="entry name" value="aggrecan core protein"/>
    <property type="match status" value="1"/>
</dbReference>
<dbReference type="FunFam" id="3.10.100.10:FF:000002">
    <property type="entry name" value="Hyaluronan proteoglycan link protein 1"/>
    <property type="match status" value="2"/>
</dbReference>
<dbReference type="FunFam" id="2.10.70.10:FF:000003">
    <property type="entry name" value="Versican core protein"/>
    <property type="match status" value="1"/>
</dbReference>
<dbReference type="FunFam" id="3.10.100.10:FF:000003">
    <property type="entry name" value="Versican core protein"/>
    <property type="match status" value="1"/>
</dbReference>
<dbReference type="FunFam" id="2.10.25.10:FF:000006">
    <property type="entry name" value="Versican core protein-like isoform 1"/>
    <property type="match status" value="1"/>
</dbReference>
<dbReference type="Gene3D" id="2.10.70.10">
    <property type="entry name" value="Complement Module, domain 1"/>
    <property type="match status" value="1"/>
</dbReference>
<dbReference type="Gene3D" id="2.60.40.10">
    <property type="entry name" value="Immunoglobulins"/>
    <property type="match status" value="1"/>
</dbReference>
<dbReference type="Gene3D" id="2.10.25.10">
    <property type="entry name" value="Laminin"/>
    <property type="match status" value="1"/>
</dbReference>
<dbReference type="Gene3D" id="3.10.100.10">
    <property type="entry name" value="Mannose-Binding Protein A, subunit A"/>
    <property type="match status" value="5"/>
</dbReference>
<dbReference type="InterPro" id="IPR001304">
    <property type="entry name" value="C-type_lectin-like"/>
</dbReference>
<dbReference type="InterPro" id="IPR016186">
    <property type="entry name" value="C-type_lectin-like/link_sf"/>
</dbReference>
<dbReference type="InterPro" id="IPR018378">
    <property type="entry name" value="C-type_lectin_CS"/>
</dbReference>
<dbReference type="InterPro" id="IPR033987">
    <property type="entry name" value="CSPG_CTLD"/>
</dbReference>
<dbReference type="InterPro" id="IPR016187">
    <property type="entry name" value="CTDL_fold"/>
</dbReference>
<dbReference type="InterPro" id="IPR001881">
    <property type="entry name" value="EGF-like_Ca-bd_dom"/>
</dbReference>
<dbReference type="InterPro" id="IPR000742">
    <property type="entry name" value="EGF-like_dom"/>
</dbReference>
<dbReference type="InterPro" id="IPR000152">
    <property type="entry name" value="EGF-type_Asp/Asn_hydroxyl_site"/>
</dbReference>
<dbReference type="InterPro" id="IPR018097">
    <property type="entry name" value="EGF_Ca-bd_CS"/>
</dbReference>
<dbReference type="InterPro" id="IPR050691">
    <property type="entry name" value="Hyaluronan_bind_Proteoglycan"/>
</dbReference>
<dbReference type="InterPro" id="IPR007110">
    <property type="entry name" value="Ig-like_dom"/>
</dbReference>
<dbReference type="InterPro" id="IPR036179">
    <property type="entry name" value="Ig-like_dom_sf"/>
</dbReference>
<dbReference type="InterPro" id="IPR013783">
    <property type="entry name" value="Ig-like_fold"/>
</dbReference>
<dbReference type="InterPro" id="IPR003006">
    <property type="entry name" value="Ig/MHC_CS"/>
</dbReference>
<dbReference type="InterPro" id="IPR003599">
    <property type="entry name" value="Ig_sub"/>
</dbReference>
<dbReference type="InterPro" id="IPR013106">
    <property type="entry name" value="Ig_V-set"/>
</dbReference>
<dbReference type="InterPro" id="IPR000538">
    <property type="entry name" value="Link_dom"/>
</dbReference>
<dbReference type="InterPro" id="IPR035976">
    <property type="entry name" value="Sushi/SCR/CCP_sf"/>
</dbReference>
<dbReference type="InterPro" id="IPR000436">
    <property type="entry name" value="Sushi_SCR_CCP_dom"/>
</dbReference>
<dbReference type="PANTHER" id="PTHR22804:SF42">
    <property type="entry name" value="AGGRECAN CORE PROTEIN"/>
    <property type="match status" value="1"/>
</dbReference>
<dbReference type="PANTHER" id="PTHR22804">
    <property type="entry name" value="AGGRECAN/VERSICAN PROTEOGLYCAN"/>
    <property type="match status" value="1"/>
</dbReference>
<dbReference type="Pfam" id="PF00008">
    <property type="entry name" value="EGF"/>
    <property type="match status" value="1"/>
</dbReference>
<dbReference type="Pfam" id="PF00059">
    <property type="entry name" value="Lectin_C"/>
    <property type="match status" value="1"/>
</dbReference>
<dbReference type="Pfam" id="PF00084">
    <property type="entry name" value="Sushi"/>
    <property type="match status" value="1"/>
</dbReference>
<dbReference type="Pfam" id="PF07686">
    <property type="entry name" value="V-set"/>
    <property type="match status" value="1"/>
</dbReference>
<dbReference type="Pfam" id="PF00193">
    <property type="entry name" value="Xlink"/>
    <property type="match status" value="4"/>
</dbReference>
<dbReference type="PRINTS" id="PR01265">
    <property type="entry name" value="LINKMODULE"/>
</dbReference>
<dbReference type="SMART" id="SM00032">
    <property type="entry name" value="CCP"/>
    <property type="match status" value="1"/>
</dbReference>
<dbReference type="SMART" id="SM00034">
    <property type="entry name" value="CLECT"/>
    <property type="match status" value="1"/>
</dbReference>
<dbReference type="SMART" id="SM00181">
    <property type="entry name" value="EGF"/>
    <property type="match status" value="1"/>
</dbReference>
<dbReference type="SMART" id="SM00179">
    <property type="entry name" value="EGF_CA"/>
    <property type="match status" value="1"/>
</dbReference>
<dbReference type="SMART" id="SM00409">
    <property type="entry name" value="IG"/>
    <property type="match status" value="1"/>
</dbReference>
<dbReference type="SMART" id="SM00406">
    <property type="entry name" value="IGv"/>
    <property type="match status" value="1"/>
</dbReference>
<dbReference type="SMART" id="SM00445">
    <property type="entry name" value="LINK"/>
    <property type="match status" value="4"/>
</dbReference>
<dbReference type="SUPFAM" id="SSF56436">
    <property type="entry name" value="C-type lectin-like"/>
    <property type="match status" value="5"/>
</dbReference>
<dbReference type="SUPFAM" id="SSF57535">
    <property type="entry name" value="Complement control module/SCR domain"/>
    <property type="match status" value="1"/>
</dbReference>
<dbReference type="SUPFAM" id="SSF48726">
    <property type="entry name" value="Immunoglobulin"/>
    <property type="match status" value="1"/>
</dbReference>
<dbReference type="PROSITE" id="PS00010">
    <property type="entry name" value="ASX_HYDROXYL"/>
    <property type="match status" value="1"/>
</dbReference>
<dbReference type="PROSITE" id="PS00615">
    <property type="entry name" value="C_TYPE_LECTIN_1"/>
    <property type="match status" value="1"/>
</dbReference>
<dbReference type="PROSITE" id="PS50041">
    <property type="entry name" value="C_TYPE_LECTIN_2"/>
    <property type="match status" value="1"/>
</dbReference>
<dbReference type="PROSITE" id="PS00022">
    <property type="entry name" value="EGF_1"/>
    <property type="match status" value="1"/>
</dbReference>
<dbReference type="PROSITE" id="PS50026">
    <property type="entry name" value="EGF_3"/>
    <property type="match status" value="1"/>
</dbReference>
<dbReference type="PROSITE" id="PS01187">
    <property type="entry name" value="EGF_CA"/>
    <property type="match status" value="1"/>
</dbReference>
<dbReference type="PROSITE" id="PS50835">
    <property type="entry name" value="IG_LIKE"/>
    <property type="match status" value="1"/>
</dbReference>
<dbReference type="PROSITE" id="PS00290">
    <property type="entry name" value="IG_MHC"/>
    <property type="match status" value="1"/>
</dbReference>
<dbReference type="PROSITE" id="PS01241">
    <property type="entry name" value="LINK_1"/>
    <property type="match status" value="4"/>
</dbReference>
<dbReference type="PROSITE" id="PS50963">
    <property type="entry name" value="LINK_2"/>
    <property type="match status" value="4"/>
</dbReference>
<dbReference type="PROSITE" id="PS50923">
    <property type="entry name" value="SUSHI"/>
    <property type="match status" value="1"/>
</dbReference>
<comment type="function">
    <text>This proteoglycan is a major component of extracellular matrix of cartilagenous tissues. A major function of this protein is to resist compression in cartilage. It binds avidly to hyaluronic acid via an N-terminal globular region. May play a regulatory role in the matrix assembly of the cartilage.</text>
</comment>
<comment type="subunit">
    <text evidence="4 5 6">Forms a complex (via covalent bonds) with MATN1; the interaction increases with age of the organism via an increase in occupancy of MATN1 binding sites (By similarity). Interacts with FBLN1 (By similarity). Interacts with COMP (By similarity).</text>
</comment>
<comment type="subcellular location">
    <subcellularLocation>
        <location evidence="3">Secreted</location>
        <location evidence="3">Extracellular space</location>
        <location evidence="3">Extracellular matrix</location>
    </subcellularLocation>
</comment>
<comment type="domain">
    <text>Two globular domains, G1 and G2, comprise the N-terminus of the proteoglycan, while another globular region, G3, makes up the C-terminus. G1 contains Link domains and thus consists of three disulfide-bonded loop structures designated as the A, B, B' motifs. G2 is similar to G1. The keratan sulfate (KS) and the chondroitin sulfate (CS) attachment domains lie between G2 and G3.</text>
</comment>
<comment type="PTM">
    <text evidence="1">Contains mostly chondroitin sulfate, but also keratan sulfate chains, N-linked and O-linked oligosaccharides.</text>
</comment>
<comment type="similarity">
    <text evidence="14">Belongs to the aggrecan/versican proteoglycan family.</text>
</comment>
<reference key="1">
    <citation type="submission" date="2000-04" db="EMBL/GenBank/DDBJ databases">
        <title>Complete coding sequence and deduced amino acid sequence of aggrecan of canine cartilage.</title>
        <authorList>
            <person name="Glant T.T."/>
            <person name="Adams M.E."/>
            <person name="Kwok S.X.F."/>
            <person name="Huang D."/>
            <person name="Fueloep C."/>
        </authorList>
    </citation>
    <scope>NUCLEOTIDE SEQUENCE [MRNA]</scope>
</reference>
<reference key="2">
    <citation type="journal article" date="1994" name="Matrix Biol.">
        <title>Length variation in the keratan sulfate domain of mammalian aggrecan.</title>
        <authorList>
            <person name="Barry F.P."/>
            <person name="Neame P.J."/>
            <person name="Sasse J."/>
            <person name="Pearson D."/>
        </authorList>
    </citation>
    <scope>NUCLEOTIDE SEQUENCE [MRNA] OF 774-833</scope>
    <source>
        <tissue>Cartilage</tissue>
    </source>
</reference>
<reference key="3">
    <citation type="submission" date="1996-08" db="EMBL/GenBank/DDBJ databases">
        <authorList>
            <person name="Adams M.E."/>
            <person name="Kowk S.X.F."/>
            <person name="Huang D."/>
            <person name="Glant T.T."/>
            <person name="Fullop C."/>
        </authorList>
    </citation>
    <scope>NUCLEOTIDE SEQUENCE [MRNA] OF 1830-2333</scope>
</reference>
<reference key="4">
    <citation type="journal article" date="1993" name="J. Biol. Chem.">
        <title>Expression of alternatively spliced epidermal growth factor-like domains in aggrecans of different species. Evidence for a novel module.</title>
        <authorList>
            <person name="Fueloep C."/>
            <person name="Walcz E."/>
            <person name="Valyon M."/>
            <person name="Glant T.T."/>
        </authorList>
    </citation>
    <scope>NUCLEOTIDE SEQUENCE [MRNA] OF 2082-2118</scope>
    <source>
        <tissue>Cartilage</tissue>
    </source>
</reference>
<evidence type="ECO:0000250" key="1"/>
<evidence type="ECO:0000250" key="2">
    <source>
        <dbReference type="UniProtKB" id="P07897"/>
    </source>
</evidence>
<evidence type="ECO:0000250" key="3">
    <source>
        <dbReference type="UniProtKB" id="P07898"/>
    </source>
</evidence>
<evidence type="ECO:0000250" key="4">
    <source>
        <dbReference type="UniProtKB" id="P13608"/>
    </source>
</evidence>
<evidence type="ECO:0000250" key="5">
    <source>
        <dbReference type="UniProtKB" id="P16112"/>
    </source>
</evidence>
<evidence type="ECO:0000250" key="6">
    <source>
        <dbReference type="UniProtKB" id="Q61282"/>
    </source>
</evidence>
<evidence type="ECO:0000255" key="7"/>
<evidence type="ECO:0000255" key="8">
    <source>
        <dbReference type="PROSITE-ProRule" id="PRU00040"/>
    </source>
</evidence>
<evidence type="ECO:0000255" key="9">
    <source>
        <dbReference type="PROSITE-ProRule" id="PRU00076"/>
    </source>
</evidence>
<evidence type="ECO:0000255" key="10">
    <source>
        <dbReference type="PROSITE-ProRule" id="PRU00114"/>
    </source>
</evidence>
<evidence type="ECO:0000255" key="11">
    <source>
        <dbReference type="PROSITE-ProRule" id="PRU00302"/>
    </source>
</evidence>
<evidence type="ECO:0000255" key="12">
    <source>
        <dbReference type="PROSITE-ProRule" id="PRU00323"/>
    </source>
</evidence>
<evidence type="ECO:0000256" key="13">
    <source>
        <dbReference type="SAM" id="MobiDB-lite"/>
    </source>
</evidence>
<evidence type="ECO:0000305" key="14"/>